<sequence>MTSMQAIPDITATPAWDALRRHHDEIGATHLRQFFADNPNRGRELVITVGDLYIDYSKHRITHDTVQLLVDLARAANLEQRRDQMLAGVHVNTSENRSVLHTALRLPRDTELIVDGQNVVQDVHAVLDVMGDFTDRLRSGEWTGATGKRINTVVNIGIGGSDLGPVMVYQALRHYADAGISARFVSNIDPADLTAKLSDLEPGTTLFIVASKTFSTLETLTNATAARRWLTDALGEAAVSKHFVAVSTNKRLVKDFGINTANMFGFWEWVGGRYSVDSAIGLSLMAVVGRESFADFLSGFHIVDQHFQNAPLESNAPVLLGLIGLWYSDFLGAQSRAVLPYSNDLARFAAYLQQLTMESNGKSTRADGTPVTTNTGEIYWGETGTNGQHAFYQLLHQGTRLVPADFIGFSQPIDDLPTVDGIGSMHDLLMSNFFAQTQVLAFGKTAEEIAAEGTPAEVVPHKVMPGNRPTTSILANRLTPSVLGQLIALYEHQVFTEGVIWGIDSFDQWGVELGKKQAEALLPVITGNASPAQQLDSSTDTLVRRYRTERGRTS</sequence>
<name>G6PI_MYCLE</name>
<dbReference type="EC" id="5.3.1.9" evidence="1"/>
<dbReference type="EMBL" id="AL583917">
    <property type="protein sequence ID" value="CAC29658.1"/>
    <property type="molecule type" value="Genomic_DNA"/>
</dbReference>
<dbReference type="PIR" id="F86927">
    <property type="entry name" value="F86927"/>
</dbReference>
<dbReference type="RefSeq" id="NP_301236.1">
    <property type="nucleotide sequence ID" value="NC_002677.1"/>
</dbReference>
<dbReference type="RefSeq" id="WP_010907561.1">
    <property type="nucleotide sequence ID" value="NC_002677.1"/>
</dbReference>
<dbReference type="SMR" id="Q9CD75"/>
<dbReference type="STRING" id="272631.gene:17573965"/>
<dbReference type="KEGG" id="mle:ML0150"/>
<dbReference type="PATRIC" id="fig|272631.5.peg.232"/>
<dbReference type="Leproma" id="ML0150"/>
<dbReference type="eggNOG" id="COG0166">
    <property type="taxonomic scope" value="Bacteria"/>
</dbReference>
<dbReference type="HOGENOM" id="CLU_017947_3_1_11"/>
<dbReference type="OrthoDB" id="140919at2"/>
<dbReference type="UniPathway" id="UPA00109">
    <property type="reaction ID" value="UER00181"/>
</dbReference>
<dbReference type="UniPathway" id="UPA00138"/>
<dbReference type="Proteomes" id="UP000000806">
    <property type="component" value="Chromosome"/>
</dbReference>
<dbReference type="GO" id="GO:0005829">
    <property type="term" value="C:cytosol"/>
    <property type="evidence" value="ECO:0007669"/>
    <property type="project" value="TreeGrafter"/>
</dbReference>
<dbReference type="GO" id="GO:0097367">
    <property type="term" value="F:carbohydrate derivative binding"/>
    <property type="evidence" value="ECO:0007669"/>
    <property type="project" value="InterPro"/>
</dbReference>
<dbReference type="GO" id="GO:0004347">
    <property type="term" value="F:glucose-6-phosphate isomerase activity"/>
    <property type="evidence" value="ECO:0007669"/>
    <property type="project" value="UniProtKB-UniRule"/>
</dbReference>
<dbReference type="GO" id="GO:0048029">
    <property type="term" value="F:monosaccharide binding"/>
    <property type="evidence" value="ECO:0007669"/>
    <property type="project" value="TreeGrafter"/>
</dbReference>
<dbReference type="GO" id="GO:0006094">
    <property type="term" value="P:gluconeogenesis"/>
    <property type="evidence" value="ECO:0007669"/>
    <property type="project" value="UniProtKB-UniRule"/>
</dbReference>
<dbReference type="GO" id="GO:0051156">
    <property type="term" value="P:glucose 6-phosphate metabolic process"/>
    <property type="evidence" value="ECO:0007669"/>
    <property type="project" value="TreeGrafter"/>
</dbReference>
<dbReference type="GO" id="GO:0006096">
    <property type="term" value="P:glycolytic process"/>
    <property type="evidence" value="ECO:0007669"/>
    <property type="project" value="UniProtKB-UniRule"/>
</dbReference>
<dbReference type="CDD" id="cd05015">
    <property type="entry name" value="SIS_PGI_1"/>
    <property type="match status" value="1"/>
</dbReference>
<dbReference type="CDD" id="cd05016">
    <property type="entry name" value="SIS_PGI_2"/>
    <property type="match status" value="1"/>
</dbReference>
<dbReference type="FunFam" id="3.40.50.10490:FF:000018">
    <property type="entry name" value="Glucose-6-phosphate isomerase"/>
    <property type="match status" value="1"/>
</dbReference>
<dbReference type="Gene3D" id="1.10.1390.10">
    <property type="match status" value="1"/>
</dbReference>
<dbReference type="Gene3D" id="3.40.50.10490">
    <property type="entry name" value="Glucose-6-phosphate isomerase like protein, domain 1"/>
    <property type="match status" value="2"/>
</dbReference>
<dbReference type="HAMAP" id="MF_00473">
    <property type="entry name" value="G6P_isomerase"/>
    <property type="match status" value="1"/>
</dbReference>
<dbReference type="InterPro" id="IPR001672">
    <property type="entry name" value="G6P_Isomerase"/>
</dbReference>
<dbReference type="InterPro" id="IPR023096">
    <property type="entry name" value="G6P_Isomerase_C"/>
</dbReference>
<dbReference type="InterPro" id="IPR018189">
    <property type="entry name" value="Phosphoglucose_isomerase_CS"/>
</dbReference>
<dbReference type="InterPro" id="IPR046348">
    <property type="entry name" value="SIS_dom_sf"/>
</dbReference>
<dbReference type="InterPro" id="IPR035476">
    <property type="entry name" value="SIS_PGI_1"/>
</dbReference>
<dbReference type="InterPro" id="IPR035482">
    <property type="entry name" value="SIS_PGI_2"/>
</dbReference>
<dbReference type="NCBIfam" id="NF001211">
    <property type="entry name" value="PRK00179.1"/>
    <property type="match status" value="1"/>
</dbReference>
<dbReference type="PANTHER" id="PTHR11469">
    <property type="entry name" value="GLUCOSE-6-PHOSPHATE ISOMERASE"/>
    <property type="match status" value="1"/>
</dbReference>
<dbReference type="PANTHER" id="PTHR11469:SF1">
    <property type="entry name" value="GLUCOSE-6-PHOSPHATE ISOMERASE"/>
    <property type="match status" value="1"/>
</dbReference>
<dbReference type="Pfam" id="PF00342">
    <property type="entry name" value="PGI"/>
    <property type="match status" value="1"/>
</dbReference>
<dbReference type="PRINTS" id="PR00662">
    <property type="entry name" value="G6PISOMERASE"/>
</dbReference>
<dbReference type="SUPFAM" id="SSF53697">
    <property type="entry name" value="SIS domain"/>
    <property type="match status" value="1"/>
</dbReference>
<dbReference type="PROSITE" id="PS00765">
    <property type="entry name" value="P_GLUCOSE_ISOMERASE_1"/>
    <property type="match status" value="1"/>
</dbReference>
<dbReference type="PROSITE" id="PS00174">
    <property type="entry name" value="P_GLUCOSE_ISOMERASE_2"/>
    <property type="match status" value="1"/>
</dbReference>
<dbReference type="PROSITE" id="PS51463">
    <property type="entry name" value="P_GLUCOSE_ISOMERASE_3"/>
    <property type="match status" value="1"/>
</dbReference>
<gene>
    <name evidence="1" type="primary">pgi</name>
    <name type="ordered locus">ML0150</name>
</gene>
<comment type="function">
    <text evidence="1">Catalyzes the reversible isomerization of glucose-6-phosphate to fructose-6-phosphate.</text>
</comment>
<comment type="catalytic activity">
    <reaction evidence="1">
        <text>alpha-D-glucose 6-phosphate = beta-D-fructose 6-phosphate</text>
        <dbReference type="Rhea" id="RHEA:11816"/>
        <dbReference type="ChEBI" id="CHEBI:57634"/>
        <dbReference type="ChEBI" id="CHEBI:58225"/>
        <dbReference type="EC" id="5.3.1.9"/>
    </reaction>
</comment>
<comment type="pathway">
    <text evidence="1">Carbohydrate biosynthesis; gluconeogenesis.</text>
</comment>
<comment type="pathway">
    <text evidence="1">Carbohydrate degradation; glycolysis; D-glyceraldehyde 3-phosphate and glycerone phosphate from D-glucose: step 2/4.</text>
</comment>
<comment type="subcellular location">
    <subcellularLocation>
        <location evidence="1">Cytoplasm</location>
    </subcellularLocation>
</comment>
<comment type="similarity">
    <text evidence="1 2">Belongs to the GPI family.</text>
</comment>
<feature type="chain" id="PRO_0000180674" description="Glucose-6-phosphate isomerase">
    <location>
        <begin position="1"/>
        <end position="554"/>
    </location>
</feature>
<feature type="active site" description="Proton donor" evidence="1">
    <location>
        <position position="358"/>
    </location>
</feature>
<feature type="active site" evidence="1">
    <location>
        <position position="389"/>
    </location>
</feature>
<feature type="active site" evidence="1">
    <location>
        <position position="515"/>
    </location>
</feature>
<evidence type="ECO:0000255" key="1">
    <source>
        <dbReference type="HAMAP-Rule" id="MF_00473"/>
    </source>
</evidence>
<evidence type="ECO:0000305" key="2"/>
<accession>Q9CD75</accession>
<proteinExistence type="inferred from homology"/>
<reference key="1">
    <citation type="journal article" date="2001" name="Nature">
        <title>Massive gene decay in the leprosy bacillus.</title>
        <authorList>
            <person name="Cole S.T."/>
            <person name="Eiglmeier K."/>
            <person name="Parkhill J."/>
            <person name="James K.D."/>
            <person name="Thomson N.R."/>
            <person name="Wheeler P.R."/>
            <person name="Honore N."/>
            <person name="Garnier T."/>
            <person name="Churcher C.M."/>
            <person name="Harris D.E."/>
            <person name="Mungall K.L."/>
            <person name="Basham D."/>
            <person name="Brown D."/>
            <person name="Chillingworth T."/>
            <person name="Connor R."/>
            <person name="Davies R.M."/>
            <person name="Devlin K."/>
            <person name="Duthoy S."/>
            <person name="Feltwell T."/>
            <person name="Fraser A."/>
            <person name="Hamlin N."/>
            <person name="Holroyd S."/>
            <person name="Hornsby T."/>
            <person name="Jagels K."/>
            <person name="Lacroix C."/>
            <person name="Maclean J."/>
            <person name="Moule S."/>
            <person name="Murphy L.D."/>
            <person name="Oliver K."/>
            <person name="Quail M.A."/>
            <person name="Rajandream M.A."/>
            <person name="Rutherford K.M."/>
            <person name="Rutter S."/>
            <person name="Seeger K."/>
            <person name="Simon S."/>
            <person name="Simmonds M."/>
            <person name="Skelton J."/>
            <person name="Squares R."/>
            <person name="Squares S."/>
            <person name="Stevens K."/>
            <person name="Taylor K."/>
            <person name="Whitehead S."/>
            <person name="Woodward J.R."/>
            <person name="Barrell B.G."/>
        </authorList>
    </citation>
    <scope>NUCLEOTIDE SEQUENCE [LARGE SCALE GENOMIC DNA]</scope>
    <source>
        <strain>TN</strain>
    </source>
</reference>
<protein>
    <recommendedName>
        <fullName evidence="1">Glucose-6-phosphate isomerase</fullName>
        <shortName evidence="1">GPI</shortName>
        <ecNumber evidence="1">5.3.1.9</ecNumber>
    </recommendedName>
    <alternativeName>
        <fullName evidence="1">Phosphoglucose isomerase</fullName>
        <shortName evidence="1">PGI</shortName>
    </alternativeName>
    <alternativeName>
        <fullName evidence="1">Phosphohexose isomerase</fullName>
        <shortName evidence="1">PHI</shortName>
    </alternativeName>
</protein>
<organism>
    <name type="scientific">Mycobacterium leprae (strain TN)</name>
    <dbReference type="NCBI Taxonomy" id="272631"/>
    <lineage>
        <taxon>Bacteria</taxon>
        <taxon>Bacillati</taxon>
        <taxon>Actinomycetota</taxon>
        <taxon>Actinomycetes</taxon>
        <taxon>Mycobacteriales</taxon>
        <taxon>Mycobacteriaceae</taxon>
        <taxon>Mycobacterium</taxon>
    </lineage>
</organism>
<keyword id="KW-0963">Cytoplasm</keyword>
<keyword id="KW-0312">Gluconeogenesis</keyword>
<keyword id="KW-0324">Glycolysis</keyword>
<keyword id="KW-0413">Isomerase</keyword>
<keyword id="KW-1185">Reference proteome</keyword>